<name>RF1_STRPM</name>
<gene>
    <name evidence="1" type="primary">prfA</name>
    <name type="ordered locus">M28_Spy0837</name>
</gene>
<comment type="function">
    <text evidence="1">Peptide chain release factor 1 directs the termination of translation in response to the peptide chain termination codons UAG and UAA.</text>
</comment>
<comment type="subcellular location">
    <subcellularLocation>
        <location evidence="1">Cytoplasm</location>
    </subcellularLocation>
</comment>
<comment type="PTM">
    <text evidence="1">Methylated by PrmC. Methylation increases the termination efficiency of RF1.</text>
</comment>
<comment type="similarity">
    <text evidence="1">Belongs to the prokaryotic/mitochondrial release factor family.</text>
</comment>
<keyword id="KW-0963">Cytoplasm</keyword>
<keyword id="KW-0488">Methylation</keyword>
<keyword id="KW-0648">Protein biosynthesis</keyword>
<protein>
    <recommendedName>
        <fullName evidence="1">Peptide chain release factor 1</fullName>
        <shortName evidence="1">RF-1</shortName>
    </recommendedName>
</protein>
<evidence type="ECO:0000255" key="1">
    <source>
        <dbReference type="HAMAP-Rule" id="MF_00093"/>
    </source>
</evidence>
<accession>Q48TL0</accession>
<sequence length="359" mass="40569">MNIYDQLQAVEDRYEELGELLSDPDVVSDTKRFMELSREEANTRETVTAYREYKQVIQTISDAEEMIKDASGDPELEEMAKEELKESKAAKEEYEEKLKILLLPKDPNDDKNIILEIRGAAGGDEAALFAGDLLTMYQKYAETQGWRFEVMESSVNGVGGIKEVVAMVSGQSVYSKLKYESGAHRVQRVPVTESQGRVHTSTATVLVMPEVEEVEYDIDPKDLRVDIYHASGAGGQNVNKVATAVRMVHIPTGIKVEMQEERTQQKNRDKAMKIIRARVADHFAQIAQDEQDAERKSTVGTGDRSERIRTYNFPQNRVTDHRIGLTLQKLDTILSGKMDEVIDALVMYDQTKKLESLNN</sequence>
<proteinExistence type="inferred from homology"/>
<feature type="chain" id="PRO_0000263367" description="Peptide chain release factor 1">
    <location>
        <begin position="1"/>
        <end position="359"/>
    </location>
</feature>
<feature type="modified residue" description="N5-methylglutamine" evidence="1">
    <location>
        <position position="236"/>
    </location>
</feature>
<organism>
    <name type="scientific">Streptococcus pyogenes serotype M28 (strain MGAS6180)</name>
    <dbReference type="NCBI Taxonomy" id="319701"/>
    <lineage>
        <taxon>Bacteria</taxon>
        <taxon>Bacillati</taxon>
        <taxon>Bacillota</taxon>
        <taxon>Bacilli</taxon>
        <taxon>Lactobacillales</taxon>
        <taxon>Streptococcaceae</taxon>
        <taxon>Streptococcus</taxon>
    </lineage>
</organism>
<reference key="1">
    <citation type="journal article" date="2005" name="J. Infect. Dis.">
        <title>Genome sequence of a serotype M28 strain of group A Streptococcus: potential new insights into puerperal sepsis and bacterial disease specificity.</title>
        <authorList>
            <person name="Green N.M."/>
            <person name="Zhang S."/>
            <person name="Porcella S.F."/>
            <person name="Nagiec M.J."/>
            <person name="Barbian K.D."/>
            <person name="Beres S.B."/>
            <person name="Lefebvre R.B."/>
            <person name="Musser J.M."/>
        </authorList>
    </citation>
    <scope>NUCLEOTIDE SEQUENCE [LARGE SCALE GENOMIC DNA]</scope>
    <source>
        <strain>MGAS6180</strain>
    </source>
</reference>
<dbReference type="EMBL" id="CP000056">
    <property type="protein sequence ID" value="AAX71950.1"/>
    <property type="molecule type" value="Genomic_DNA"/>
</dbReference>
<dbReference type="RefSeq" id="WP_002994969.1">
    <property type="nucleotide sequence ID" value="NC_007296.2"/>
</dbReference>
<dbReference type="SMR" id="Q48TL0"/>
<dbReference type="KEGG" id="spb:M28_Spy0837"/>
<dbReference type="HOGENOM" id="CLU_036856_0_1_9"/>
<dbReference type="GO" id="GO:0005737">
    <property type="term" value="C:cytoplasm"/>
    <property type="evidence" value="ECO:0007669"/>
    <property type="project" value="UniProtKB-SubCell"/>
</dbReference>
<dbReference type="GO" id="GO:0016149">
    <property type="term" value="F:translation release factor activity, codon specific"/>
    <property type="evidence" value="ECO:0007669"/>
    <property type="project" value="UniProtKB-UniRule"/>
</dbReference>
<dbReference type="FunFam" id="3.30.160.20:FF:000027">
    <property type="entry name" value="Peptide chain release factor 1"/>
    <property type="match status" value="1"/>
</dbReference>
<dbReference type="FunFam" id="3.30.70.1660:FF:000002">
    <property type="entry name" value="Peptide chain release factor 1"/>
    <property type="match status" value="1"/>
</dbReference>
<dbReference type="FunFam" id="3.30.70.1660:FF:000004">
    <property type="entry name" value="Peptide chain release factor 1"/>
    <property type="match status" value="1"/>
</dbReference>
<dbReference type="Gene3D" id="3.30.160.20">
    <property type="match status" value="1"/>
</dbReference>
<dbReference type="Gene3D" id="3.30.70.1660">
    <property type="match status" value="1"/>
</dbReference>
<dbReference type="Gene3D" id="6.10.140.1950">
    <property type="match status" value="1"/>
</dbReference>
<dbReference type="HAMAP" id="MF_00093">
    <property type="entry name" value="Rel_fac_1"/>
    <property type="match status" value="1"/>
</dbReference>
<dbReference type="InterPro" id="IPR005139">
    <property type="entry name" value="PCRF"/>
</dbReference>
<dbReference type="InterPro" id="IPR000352">
    <property type="entry name" value="Pep_chain_release_fac_I"/>
</dbReference>
<dbReference type="InterPro" id="IPR045853">
    <property type="entry name" value="Pep_chain_release_fac_I_sf"/>
</dbReference>
<dbReference type="InterPro" id="IPR050057">
    <property type="entry name" value="Prokaryotic/Mito_RF"/>
</dbReference>
<dbReference type="InterPro" id="IPR004373">
    <property type="entry name" value="RF-1"/>
</dbReference>
<dbReference type="NCBIfam" id="TIGR00019">
    <property type="entry name" value="prfA"/>
    <property type="match status" value="1"/>
</dbReference>
<dbReference type="NCBIfam" id="NF001859">
    <property type="entry name" value="PRK00591.1"/>
    <property type="match status" value="1"/>
</dbReference>
<dbReference type="PANTHER" id="PTHR43804">
    <property type="entry name" value="LD18447P"/>
    <property type="match status" value="1"/>
</dbReference>
<dbReference type="PANTHER" id="PTHR43804:SF7">
    <property type="entry name" value="LD18447P"/>
    <property type="match status" value="1"/>
</dbReference>
<dbReference type="Pfam" id="PF03462">
    <property type="entry name" value="PCRF"/>
    <property type="match status" value="1"/>
</dbReference>
<dbReference type="Pfam" id="PF00472">
    <property type="entry name" value="RF-1"/>
    <property type="match status" value="1"/>
</dbReference>
<dbReference type="SMART" id="SM00937">
    <property type="entry name" value="PCRF"/>
    <property type="match status" value="1"/>
</dbReference>
<dbReference type="SUPFAM" id="SSF75620">
    <property type="entry name" value="Release factor"/>
    <property type="match status" value="1"/>
</dbReference>
<dbReference type="PROSITE" id="PS00745">
    <property type="entry name" value="RF_PROK_I"/>
    <property type="match status" value="1"/>
</dbReference>